<accession>P17212</accession>
<dbReference type="EMBL" id="J04240">
    <property type="protein sequence ID" value="AAB52500.1"/>
    <property type="molecule type" value="Genomic_DNA"/>
</dbReference>
<dbReference type="PIR" id="A43633">
    <property type="entry name" value="A43633"/>
</dbReference>
<dbReference type="RefSeq" id="NP_040419.1">
    <property type="nucleotide sequence ID" value="NC_001379.1"/>
</dbReference>
<dbReference type="SMR" id="P17212"/>
<dbReference type="InterPro" id="IPR041151">
    <property type="entry name" value="Bac_RepA_C"/>
</dbReference>
<dbReference type="InterPro" id="IPR010724">
    <property type="entry name" value="RepA_N"/>
</dbReference>
<dbReference type="Pfam" id="PF18008">
    <property type="entry name" value="Bac_RepA_C"/>
    <property type="match status" value="1"/>
</dbReference>
<dbReference type="Pfam" id="PF06970">
    <property type="entry name" value="RepA_N"/>
    <property type="match status" value="1"/>
</dbReference>
<reference key="1">
    <citation type="journal article" date="1989" name="Appl. Environ. Microbiol.">
        <title>Complete nucleotide sequence and characterization of a cryptic plasmid from Lactobacillus helveticus subsp. jugurti.</title>
        <authorList>
            <person name="Takiguchi R."/>
            <person name="Hashiba H."/>
            <person name="Aoyama K."/>
            <person name="Ishii S."/>
        </authorList>
    </citation>
    <scope>NUCLEOTIDE SEQUENCE [GENOMIC DNA]</scope>
    <source>
        <strain>Subsp. jugurti</strain>
    </source>
</reference>
<organism>
    <name type="scientific">Lactobacillus helveticus</name>
    <name type="common">Lactobacillus suntoryeus</name>
    <dbReference type="NCBI Taxonomy" id="1587"/>
    <lineage>
        <taxon>Bacteria</taxon>
        <taxon>Bacillati</taxon>
        <taxon>Bacillota</taxon>
        <taxon>Bacilli</taxon>
        <taxon>Lactobacillales</taxon>
        <taxon>Lactobacillaceae</taxon>
        <taxon>Lactobacillus</taxon>
    </lineage>
</organism>
<name>41KD_LACHE</name>
<feature type="chain" id="PRO_0000068345" description="41 kDa protein">
    <location>
        <begin position="1"/>
        <end position="353"/>
    </location>
</feature>
<feature type="region of interest" description="Disordered" evidence="1">
    <location>
        <begin position="132"/>
        <end position="197"/>
    </location>
</feature>
<feature type="compositionally biased region" description="Basic and acidic residues" evidence="1">
    <location>
        <begin position="157"/>
        <end position="169"/>
    </location>
</feature>
<sequence length="353" mass="41157">MEVFFMRRYSATQINAELFWKFPKFLSINKKYVGLTNDDRMAYMLIKDRYRYSLSNNWIDKDKNVYVYFTIDDLKELLHVGKNKVTRIKQHLIDYGLLEIVKQGFDPQNKKNYPDRIYLLQPEYDPTDLISQSSHASALEQSGIPKMGTRYQNEGNLDNKGKSDSENCNKDTSALEQSGIPKMGANKDNNSSDTIKDTIKDTDQWNFSTNNYTPEQVTAQNQDLLSHLGETLTGDKEAPMFLNKDSINLIAKWFRTPEGASECISTILNAANDSRKNAESQIGHHELYFEDYNNELKRMITNRLRRYFNKMRTAKDGKIKNPKNYLYVSMRNMFDKWQNDVLMAEKDKANNKD</sequence>
<evidence type="ECO:0000256" key="1">
    <source>
        <dbReference type="SAM" id="MobiDB-lite"/>
    </source>
</evidence>
<proteinExistence type="predicted"/>
<geneLocation type="plasmid">
    <name>pLJ1</name>
</geneLocation>
<keyword id="KW-0614">Plasmid</keyword>
<protein>
    <recommendedName>
        <fullName>41 kDa protein</fullName>
    </recommendedName>
</protein>